<organism>
    <name type="scientific">Arabidopsis thaliana</name>
    <name type="common">Mouse-ear cress</name>
    <dbReference type="NCBI Taxonomy" id="3702"/>
    <lineage>
        <taxon>Eukaryota</taxon>
        <taxon>Viridiplantae</taxon>
        <taxon>Streptophyta</taxon>
        <taxon>Embryophyta</taxon>
        <taxon>Tracheophyta</taxon>
        <taxon>Spermatophyta</taxon>
        <taxon>Magnoliopsida</taxon>
        <taxon>eudicotyledons</taxon>
        <taxon>Gunneridae</taxon>
        <taxon>Pentapetalae</taxon>
        <taxon>rosids</taxon>
        <taxon>malvids</taxon>
        <taxon>Brassicales</taxon>
        <taxon>Brassicaceae</taxon>
        <taxon>Camelineae</taxon>
        <taxon>Arabidopsis</taxon>
    </lineage>
</organism>
<keyword id="KW-0963">Cytoplasm</keyword>
<keyword id="KW-0479">Metal-binding</keyword>
<keyword id="KW-0539">Nucleus</keyword>
<keyword id="KW-1185">Reference proteome</keyword>
<keyword id="KW-0833">Ubl conjugation pathway</keyword>
<keyword id="KW-0862">Zinc</keyword>
<keyword id="KW-0863">Zinc-finger</keyword>
<reference key="1">
    <citation type="journal article" date="2000" name="Nature">
        <title>Sequence and analysis of chromosome 3 of the plant Arabidopsis thaliana.</title>
        <authorList>
            <person name="Salanoubat M."/>
            <person name="Lemcke K."/>
            <person name="Rieger M."/>
            <person name="Ansorge W."/>
            <person name="Unseld M."/>
            <person name="Fartmann B."/>
            <person name="Valle G."/>
            <person name="Bloecker H."/>
            <person name="Perez-Alonso M."/>
            <person name="Obermaier B."/>
            <person name="Delseny M."/>
            <person name="Boutry M."/>
            <person name="Grivell L.A."/>
            <person name="Mache R."/>
            <person name="Puigdomenech P."/>
            <person name="De Simone V."/>
            <person name="Choisne N."/>
            <person name="Artiguenave F."/>
            <person name="Robert C."/>
            <person name="Brottier P."/>
            <person name="Wincker P."/>
            <person name="Cattolico L."/>
            <person name="Weissenbach J."/>
            <person name="Saurin W."/>
            <person name="Quetier F."/>
            <person name="Schaefer M."/>
            <person name="Mueller-Auer S."/>
            <person name="Gabel C."/>
            <person name="Fuchs M."/>
            <person name="Benes V."/>
            <person name="Wurmbach E."/>
            <person name="Drzonek H."/>
            <person name="Erfle H."/>
            <person name="Jordan N."/>
            <person name="Bangert S."/>
            <person name="Wiedelmann R."/>
            <person name="Kranz H."/>
            <person name="Voss H."/>
            <person name="Holland R."/>
            <person name="Brandt P."/>
            <person name="Nyakatura G."/>
            <person name="Vezzi A."/>
            <person name="D'Angelo M."/>
            <person name="Pallavicini A."/>
            <person name="Toppo S."/>
            <person name="Simionati B."/>
            <person name="Conrad A."/>
            <person name="Hornischer K."/>
            <person name="Kauer G."/>
            <person name="Loehnert T.-H."/>
            <person name="Nordsiek G."/>
            <person name="Reichelt J."/>
            <person name="Scharfe M."/>
            <person name="Schoen O."/>
            <person name="Bargues M."/>
            <person name="Terol J."/>
            <person name="Climent J."/>
            <person name="Navarro P."/>
            <person name="Collado C."/>
            <person name="Perez-Perez A."/>
            <person name="Ottenwaelder B."/>
            <person name="Duchemin D."/>
            <person name="Cooke R."/>
            <person name="Laudie M."/>
            <person name="Berger-Llauro C."/>
            <person name="Purnelle B."/>
            <person name="Masuy D."/>
            <person name="de Haan M."/>
            <person name="Maarse A.C."/>
            <person name="Alcaraz J.-P."/>
            <person name="Cottet A."/>
            <person name="Casacuberta E."/>
            <person name="Monfort A."/>
            <person name="Argiriou A."/>
            <person name="Flores M."/>
            <person name="Liguori R."/>
            <person name="Vitale D."/>
            <person name="Mannhaupt G."/>
            <person name="Haase D."/>
            <person name="Schoof H."/>
            <person name="Rudd S."/>
            <person name="Zaccaria P."/>
            <person name="Mewes H.-W."/>
            <person name="Mayer K.F.X."/>
            <person name="Kaul S."/>
            <person name="Town C.D."/>
            <person name="Koo H.L."/>
            <person name="Tallon L.J."/>
            <person name="Jenkins J."/>
            <person name="Rooney T."/>
            <person name="Rizzo M."/>
            <person name="Walts A."/>
            <person name="Utterback T."/>
            <person name="Fujii C.Y."/>
            <person name="Shea T.P."/>
            <person name="Creasy T.H."/>
            <person name="Haas B."/>
            <person name="Maiti R."/>
            <person name="Wu D."/>
            <person name="Peterson J."/>
            <person name="Van Aken S."/>
            <person name="Pai G."/>
            <person name="Militscher J."/>
            <person name="Sellers P."/>
            <person name="Gill J.E."/>
            <person name="Feldblyum T.V."/>
            <person name="Preuss D."/>
            <person name="Lin X."/>
            <person name="Nierman W.C."/>
            <person name="Salzberg S.L."/>
            <person name="White O."/>
            <person name="Venter J.C."/>
            <person name="Fraser C.M."/>
            <person name="Kaneko T."/>
            <person name="Nakamura Y."/>
            <person name="Sato S."/>
            <person name="Kato T."/>
            <person name="Asamizu E."/>
            <person name="Sasamoto S."/>
            <person name="Kimura T."/>
            <person name="Idesawa K."/>
            <person name="Kawashima K."/>
            <person name="Kishida Y."/>
            <person name="Kiyokawa C."/>
            <person name="Kohara M."/>
            <person name="Matsumoto M."/>
            <person name="Matsuno A."/>
            <person name="Muraki A."/>
            <person name="Nakayama S."/>
            <person name="Nakazaki N."/>
            <person name="Shinpo S."/>
            <person name="Takeuchi C."/>
            <person name="Wada T."/>
            <person name="Watanabe A."/>
            <person name="Yamada M."/>
            <person name="Yasuda M."/>
            <person name="Tabata S."/>
        </authorList>
    </citation>
    <scope>NUCLEOTIDE SEQUENCE [LARGE SCALE GENOMIC DNA]</scope>
    <source>
        <strain>cv. Columbia</strain>
    </source>
</reference>
<reference key="2">
    <citation type="journal article" date="2017" name="Plant J.">
        <title>Araport11: a complete reannotation of the Arabidopsis thaliana reference genome.</title>
        <authorList>
            <person name="Cheng C.Y."/>
            <person name="Krishnakumar V."/>
            <person name="Chan A.P."/>
            <person name="Thibaud-Nissen F."/>
            <person name="Schobel S."/>
            <person name="Town C.D."/>
        </authorList>
    </citation>
    <scope>GENOME REANNOTATION</scope>
    <source>
        <strain>cv. Columbia</strain>
    </source>
</reference>
<reference key="3">
    <citation type="journal article" date="2006" name="Plant Biotechnol. J.">
        <title>Simultaneous high-throughput recombinational cloning of open reading frames in closed and open configurations.</title>
        <authorList>
            <person name="Underwood B.A."/>
            <person name="Vanderhaeghen R."/>
            <person name="Whitford R."/>
            <person name="Town C.D."/>
            <person name="Hilson P."/>
        </authorList>
    </citation>
    <scope>NUCLEOTIDE SEQUENCE [LARGE SCALE MRNA]</scope>
    <source>
        <strain>cv. Columbia</strain>
    </source>
</reference>
<reference key="4">
    <citation type="journal article" date="2002" name="Plant Cell">
        <title>Role of the Arabidopsis RING-H2 protein RBX1 in RUB modification and SCF function.</title>
        <authorList>
            <person name="Gray W.M."/>
            <person name="Hellmann H."/>
            <person name="Dharmasiri S."/>
            <person name="Estelle M."/>
        </authorList>
    </citation>
    <scope>DISCUSSION OF SEQUENCE</scope>
</reference>
<reference key="5">
    <citation type="journal article" date="2002" name="J. Biol. Chem.">
        <title>The AtRbx1 protein is part of plant SCF complexes, and its down-regulation causes severe growth and developmental defects.</title>
        <authorList>
            <person name="Lechner E."/>
            <person name="Xie D."/>
            <person name="Grava S."/>
            <person name="Pigaglio E."/>
            <person name="Planchais S."/>
            <person name="Murray J.A.H."/>
            <person name="Parmentier Y."/>
            <person name="Mutterer J."/>
            <person name="Dubreucq B."/>
            <person name="Shen W.-H."/>
            <person name="Genschik P."/>
        </authorList>
    </citation>
    <scope>TISSUE SPECIFICITY</scope>
</reference>
<feature type="chain" id="PRO_0000056020" description="RING-box protein 1b">
    <location>
        <begin position="1"/>
        <end position="115"/>
    </location>
</feature>
<feature type="zinc finger region" description="RING-type" evidence="3">
    <location>
        <begin position="60"/>
        <end position="107"/>
    </location>
</feature>
<feature type="region of interest" description="Disordered" evidence="4">
    <location>
        <begin position="1"/>
        <end position="26"/>
    </location>
</feature>
<feature type="compositionally biased region" description="Low complexity" evidence="4">
    <location>
        <begin position="13"/>
        <end position="24"/>
    </location>
</feature>
<feature type="binding site" evidence="2">
    <location>
        <position position="49"/>
    </location>
    <ligand>
        <name>Zn(2+)</name>
        <dbReference type="ChEBI" id="CHEBI:29105"/>
        <label>1</label>
    </ligand>
</feature>
<feature type="binding site" evidence="2">
    <location>
        <position position="52"/>
    </location>
    <ligand>
        <name>Zn(2+)</name>
        <dbReference type="ChEBI" id="CHEBI:29105"/>
        <label>1</label>
    </ligand>
</feature>
<feature type="binding site" evidence="2">
    <location>
        <position position="60"/>
    </location>
    <ligand>
        <name>Zn(2+)</name>
        <dbReference type="ChEBI" id="CHEBI:29105"/>
        <label>2</label>
    </ligand>
</feature>
<feature type="binding site" evidence="2">
    <location>
        <position position="63"/>
    </location>
    <ligand>
        <name>Zn(2+)</name>
        <dbReference type="ChEBI" id="CHEBI:29105"/>
        <label>2</label>
    </ligand>
</feature>
<feature type="binding site" evidence="2">
    <location>
        <position position="75"/>
    </location>
    <ligand>
        <name>Zn(2+)</name>
        <dbReference type="ChEBI" id="CHEBI:29105"/>
        <label>2</label>
    </ligand>
</feature>
<feature type="binding site" evidence="2">
    <location>
        <position position="82"/>
    </location>
    <ligand>
        <name>Zn(2+)</name>
        <dbReference type="ChEBI" id="CHEBI:29105"/>
        <label>3</label>
    </ligand>
</feature>
<feature type="binding site" evidence="2">
    <location>
        <position position="84"/>
    </location>
    <ligand>
        <name>Zn(2+)</name>
        <dbReference type="ChEBI" id="CHEBI:29105"/>
        <label>3</label>
    </ligand>
</feature>
<feature type="binding site" evidence="2">
    <location>
        <position position="87"/>
    </location>
    <ligand>
        <name>Zn(2+)</name>
        <dbReference type="ChEBI" id="CHEBI:29105"/>
        <label>1</label>
    </ligand>
</feature>
<feature type="binding site" evidence="2">
    <location>
        <position position="89"/>
    </location>
    <ligand>
        <name>Zn(2+)</name>
        <dbReference type="ChEBI" id="CHEBI:29105"/>
        <label>2</label>
    </ligand>
</feature>
<feature type="binding site" evidence="2">
    <location>
        <position position="101"/>
    </location>
    <ligand>
        <name>Zn(2+)</name>
        <dbReference type="ChEBI" id="CHEBI:29105"/>
        <label>3</label>
    </ligand>
</feature>
<feature type="binding site" evidence="2">
    <location>
        <position position="104"/>
    </location>
    <ligand>
        <name>Zn(2+)</name>
        <dbReference type="ChEBI" id="CHEBI:29105"/>
        <label>3</label>
    </ligand>
</feature>
<gene>
    <name type="primary">RBX1B</name>
    <name type="ordered locus">At3g42830</name>
    <name type="ORF">T21C14.50</name>
</gene>
<sequence>MASLNSDVIMGESSSISVPSSSSKNSKRFELKKWSAVALWAWDIVVDNCAICRNHIMDLCIECLANQASATSEECTVAWGVCNHAFHFHCISRWLKTRQVCPLDVCEWEFQKYGH</sequence>
<comment type="function">
    <text evidence="1">Component of the SCF (SKP1-CUL1-F-box protein) E3 ubiquitin ligase complex, which mediates the ubiquitination and subsequent proteasomal degradation of target proteins. The SCF complex plays a crucial role in regulating response to auxin and is essential for growth and development. Through the RING-type zinc finger, seems to recruit the E2 ubiquitination enzyme, to the complex and brings it into close proximity to the substrate (By similarity).</text>
</comment>
<comment type="pathway">
    <text>Protein modification; protein ubiquitination.</text>
</comment>
<comment type="subunit">
    <text>Part of SCF complexes, which consist of a SKP1-related protein, a cullin, a RBX protein and a F-box protein.</text>
</comment>
<comment type="subcellular location">
    <subcellularLocation>
        <location evidence="1">Cytoplasm</location>
    </subcellularLocation>
    <subcellularLocation>
        <location evidence="1">Nucleus</location>
    </subcellularLocation>
</comment>
<comment type="tissue specificity">
    <text evidence="5">Not detected in floral buds, stems and roots.</text>
</comment>
<comment type="domain">
    <text>The RING-type zinc finger domain is essential for ubiquitin ligase activity. It coordinates an additional third zinc ion.</text>
</comment>
<comment type="similarity">
    <text evidence="6">Belongs to the RING-box family.</text>
</comment>
<proteinExistence type="evidence at transcript level"/>
<dbReference type="EMBL" id="AL138639">
    <property type="protein sequence ID" value="CAB87200.1"/>
    <property type="molecule type" value="Genomic_DNA"/>
</dbReference>
<dbReference type="EMBL" id="CP002686">
    <property type="protein sequence ID" value="AEE77754.1"/>
    <property type="molecule type" value="Genomic_DNA"/>
</dbReference>
<dbReference type="EMBL" id="DQ446722">
    <property type="protein sequence ID" value="ABE65984.1"/>
    <property type="molecule type" value="mRNA"/>
</dbReference>
<dbReference type="PIR" id="T47341">
    <property type="entry name" value="T47341"/>
</dbReference>
<dbReference type="RefSeq" id="NP_189869.1">
    <property type="nucleotide sequence ID" value="NM_114151.1"/>
</dbReference>
<dbReference type="SMR" id="Q9M2B0"/>
<dbReference type="ComplexPortal" id="CPX-1449">
    <property type="entry name" value="SCF(COI1) ubiquitin ligase complex, variant CUL1-RBX1B-SKP1A"/>
</dbReference>
<dbReference type="ComplexPortal" id="CPX-1450">
    <property type="entry name" value="SCF(COI1) ubiquitin ligase complex, variant CUL1-RBX1B-SKP1B"/>
</dbReference>
<dbReference type="ComplexPortal" id="CPX-1451">
    <property type="entry name" value="SCF(COI1) ubiquitin ligase complex, variant CUL1-RBX1B-ASK3"/>
</dbReference>
<dbReference type="ComplexPortal" id="CPX-1452">
    <property type="entry name" value="SCF(COI1) ubiquitin ligase complex, variant CUL1-RBX1B-ASK4"/>
</dbReference>
<dbReference type="ComplexPortal" id="CPX-1453">
    <property type="entry name" value="SCF(COI1) ubiquitin ligase complex, variant CUL1-RBX1B-ASK5"/>
</dbReference>
<dbReference type="ComplexPortal" id="CPX-1454">
    <property type="entry name" value="SCF(COI1) ubiquitin ligase complex, variant CUL1-RBX1B-ASK6"/>
</dbReference>
<dbReference type="ComplexPortal" id="CPX-1455">
    <property type="entry name" value="SCF(COI1) ubiquitin ligase complex, variant CUL1-RBX1B-ASK7"/>
</dbReference>
<dbReference type="ComplexPortal" id="CPX-1456">
    <property type="entry name" value="SCF(COI1) ubiquitin ligase complex, variant CUL1-RBX1B-ASK8"/>
</dbReference>
<dbReference type="ComplexPortal" id="CPX-1457">
    <property type="entry name" value="SCF(COI1) ubiquitin ligase complex, variant CUL1-RBX1B-ASK9"/>
</dbReference>
<dbReference type="ComplexPortal" id="CPX-1458">
    <property type="entry name" value="SCF(COI1) ubiquitin ligase complex, variant CUL1-RBX1B-ASK10"/>
</dbReference>
<dbReference type="ComplexPortal" id="CPX-1459">
    <property type="entry name" value="SCF(COI1) ubiquitin ligase complex, variant CUL1-RBX1B-ASK11"/>
</dbReference>
<dbReference type="ComplexPortal" id="CPX-1460">
    <property type="entry name" value="SCF(COI1) ubiquitin ligase complex, variant CUL1-RBX1B-ASK12"/>
</dbReference>
<dbReference type="ComplexPortal" id="CPX-1461">
    <property type="entry name" value="SCF(COI1) ubiquitin ligase complex, variant CUL1-RBX1B-ASK13"/>
</dbReference>
<dbReference type="ComplexPortal" id="CPX-1462">
    <property type="entry name" value="SCF(COI1) ubiquitin ligase complex, variant CUL1-RBX1B-ASK14"/>
</dbReference>
<dbReference type="ComplexPortal" id="CPX-1463">
    <property type="entry name" value="SCF(COI1) ubiquitin ligase complex, variant CUL1-RBX1B-ASK15"/>
</dbReference>
<dbReference type="ComplexPortal" id="CPX-1464">
    <property type="entry name" value="SCF(COI1) ubiquitin ligase complex, variant CUL1-RBX1B-ASK16"/>
</dbReference>
<dbReference type="ComplexPortal" id="CPX-1465">
    <property type="entry name" value="SCF(COI1) ubiquitin ligase complex, variant CUL1-RBX1B-ASK17"/>
</dbReference>
<dbReference type="ComplexPortal" id="CPX-1466">
    <property type="entry name" value="SCF(COI1) ubiquitin ligase complex, variant CUL1-RBX1B-ASK18"/>
</dbReference>
<dbReference type="ComplexPortal" id="CPX-1467">
    <property type="entry name" value="SCF(COI1) ubiquitin ligase complex, variant CUL1-RBX1B-ASK19"/>
</dbReference>
<dbReference type="ComplexPortal" id="CPX-1468">
    <property type="entry name" value="SCF(COI1) ubiquitin ligase complex, variant CUL1-RBX1B-ASK20"/>
</dbReference>
<dbReference type="ComplexPortal" id="CPX-1469">
    <property type="entry name" value="SCF(COI1) ubiquitin ligase complex, variant CUL1-RBX1B-ASK21"/>
</dbReference>
<dbReference type="ComplexPortal" id="CPX-1492">
    <property type="entry name" value="SCF(COI1) ubiquitin ligase complex, variant CUL2-RBX1B-SKP1A"/>
</dbReference>
<dbReference type="ComplexPortal" id="CPX-1493">
    <property type="entry name" value="SCF(COI1) ubiquitin ligase complex, variant CUL2-RBX1B-SKP1B"/>
</dbReference>
<dbReference type="ComplexPortal" id="CPX-1494">
    <property type="entry name" value="SCF(COI1) ubiquitin ligase complex, variant CUL2-RBX1B-ASK3"/>
</dbReference>
<dbReference type="ComplexPortal" id="CPX-1495">
    <property type="entry name" value="SCF(COI1) ubiquitin ligase complex, variant CUL2-RBX1B-ASK4"/>
</dbReference>
<dbReference type="ComplexPortal" id="CPX-1496">
    <property type="entry name" value="SCF(COI1) ubiquitin ligase complex, variant CUL2-RBX1B-ASK5"/>
</dbReference>
<dbReference type="ComplexPortal" id="CPX-1497">
    <property type="entry name" value="SCF(COI1) ubiquitin ligase complex, variant CUL2-RBX1B-ASK6"/>
</dbReference>
<dbReference type="ComplexPortal" id="CPX-1498">
    <property type="entry name" value="SCF(COI1) ubiquitin ligase complex, variant CUL2-RBX1B-ASK7"/>
</dbReference>
<dbReference type="ComplexPortal" id="CPX-1499">
    <property type="entry name" value="SCF(COI1) ubiquitin ligase complex, variant CUL2-RBX1B-ASK8"/>
</dbReference>
<dbReference type="ComplexPortal" id="CPX-1502">
    <property type="entry name" value="SCF(COI1) ubiquitin ligase complex, variant CUL2-RBX1B-ASK9"/>
</dbReference>
<dbReference type="ComplexPortal" id="CPX-1503">
    <property type="entry name" value="SCF(COI1) ubiquitin ligase complex, variant CUL2-RBX1B-ASK10"/>
</dbReference>
<dbReference type="ComplexPortal" id="CPX-1504">
    <property type="entry name" value="SCF(COI1) ubiquitin ligase complex, variant CUL2-RBX1B-ASK11"/>
</dbReference>
<dbReference type="ComplexPortal" id="CPX-1505">
    <property type="entry name" value="SCF(COI1) ubiquitin ligase complex, variant CUL2-RBX1B-ASK12"/>
</dbReference>
<dbReference type="ComplexPortal" id="CPX-1506">
    <property type="entry name" value="SCF(COI1) ubiquitin ligase complex, variant CUL2-RBX1B-ASK13"/>
</dbReference>
<dbReference type="ComplexPortal" id="CPX-1507">
    <property type="entry name" value="SCF(COI1) ubiquitin ligase complex, variant CUL2-RBX1B-ASK14"/>
</dbReference>
<dbReference type="ComplexPortal" id="CPX-1508">
    <property type="entry name" value="SCF(COI1) ubiquitin ligase complex, variant CUL2-RBX1B-ASK15"/>
</dbReference>
<dbReference type="ComplexPortal" id="CPX-1509">
    <property type="entry name" value="SCF(COI1) ubiquitin ligase complex, variant CUL2-RBX1B-ASK16"/>
</dbReference>
<dbReference type="ComplexPortal" id="CPX-1510">
    <property type="entry name" value="SCF(COI1) ubiquitin ligase complex, variant CUL2-RBX1B-ASK17"/>
</dbReference>
<dbReference type="ComplexPortal" id="CPX-1511">
    <property type="entry name" value="SCF(COI1) ubiquitin ligase complex, variant CUL2-RBX1B-ASK18"/>
</dbReference>
<dbReference type="ComplexPortal" id="CPX-1512">
    <property type="entry name" value="SCF(COI1) ubiquitin ligase complex, variant CUL2-RBX1B-ASK19"/>
</dbReference>
<dbReference type="ComplexPortal" id="CPX-1513">
    <property type="entry name" value="SCF(COI1) ubiquitin ligase complex, variant CUL2-RBX1B-ASK20"/>
</dbReference>
<dbReference type="ComplexPortal" id="CPX-1514">
    <property type="entry name" value="SCF(COI1) ubiquitin ligase complex, variant CUL2-RBX1B-ASK21"/>
</dbReference>
<dbReference type="ComplexPortal" id="CPX-1535">
    <property type="entry name" value="SCF(TIR1) ubiquitin ligase complex, variant CUL1-RBX1B-SKP1A"/>
</dbReference>
<dbReference type="ComplexPortal" id="CPX-1536">
    <property type="entry name" value="SCF(TIR1) ubiquitin ligase complex, variant CUL1-RBX1B-SKP1B"/>
</dbReference>
<dbReference type="ComplexPortal" id="CPX-1537">
    <property type="entry name" value="SCF(TIR1) ubiquitin ligase complex, variant CUL1-RBX1B-ASK3"/>
</dbReference>
<dbReference type="ComplexPortal" id="CPX-1538">
    <property type="entry name" value="SCF(TIR1) ubiquitin ligase complex, variant CUL1-RBX1B-ASK4"/>
</dbReference>
<dbReference type="ComplexPortal" id="CPX-1539">
    <property type="entry name" value="SCF(TIR1) ubiquitin ligase complex, variant CUL1-RBX1B-ASK5"/>
</dbReference>
<dbReference type="ComplexPortal" id="CPX-1540">
    <property type="entry name" value="SCF(TIR1) ubiquitin ligase complex, variant CUL1-RBX1B-ASK6"/>
</dbReference>
<dbReference type="ComplexPortal" id="CPX-1541">
    <property type="entry name" value="SCF(TIR1) ubiquitin ligase complex, variant CUL1-RBX1B-ASK7"/>
</dbReference>
<dbReference type="ComplexPortal" id="CPX-1542">
    <property type="entry name" value="SCF(TIR1) ubiquitin ligase complex, variant CUL1-RBX1B-ASK8"/>
</dbReference>
<dbReference type="ComplexPortal" id="CPX-1543">
    <property type="entry name" value="SCF(TIR1) ubiquitin ligase complex, variant CUL1-RBX1B-ASK9"/>
</dbReference>
<dbReference type="ComplexPortal" id="CPX-1544">
    <property type="entry name" value="SCF(TIR1) ubiquitin ligase complex, variant CUL1-RBX1B-ASK10"/>
</dbReference>
<dbReference type="ComplexPortal" id="CPX-1545">
    <property type="entry name" value="SCF(TIR1) ubiquitin ligase complex, variant CUL1-RBX1B-ASK11"/>
</dbReference>
<dbReference type="ComplexPortal" id="CPX-1546">
    <property type="entry name" value="SCF(TIR1) ubiquitin ligase complex, variant CUL1-RBX1B-ASK12"/>
</dbReference>
<dbReference type="ComplexPortal" id="CPX-1547">
    <property type="entry name" value="SCF(TIR1) ubiquitin ligase complex, variant CUL1-RBX1B-ASK13"/>
</dbReference>
<dbReference type="ComplexPortal" id="CPX-1548">
    <property type="entry name" value="SCF(TIR1) ubiquitin ligase complex, variant CUL1-RBX1B-ASK14"/>
</dbReference>
<dbReference type="ComplexPortal" id="CPX-1549">
    <property type="entry name" value="SCF(TIR1) ubiquitin ligase complex, variant CUL1-RBX1B-ASK15"/>
</dbReference>
<dbReference type="ComplexPortal" id="CPX-1550">
    <property type="entry name" value="SCF(TIR1) ubiquitin ligase complex, variant CUL1-RBX1B-ASK16"/>
</dbReference>
<dbReference type="ComplexPortal" id="CPX-1551">
    <property type="entry name" value="SCF(TIR1) ubiquitin ligase complex, variant CUL1-RBX1B-ASK17"/>
</dbReference>
<dbReference type="ComplexPortal" id="CPX-1552">
    <property type="entry name" value="SCF(TIR1) ubiquitin ligase complex, variant CUL1-RBX1B-ASK18"/>
</dbReference>
<dbReference type="ComplexPortal" id="CPX-1553">
    <property type="entry name" value="SCF(TIR1) ubiquitin ligase complex, variant CUL1-RBX1B-ASK19"/>
</dbReference>
<dbReference type="ComplexPortal" id="CPX-1554">
    <property type="entry name" value="SCF(TIR1) ubiquitin ligase complex, variant CUL1-RBX1B-ASK20"/>
</dbReference>
<dbReference type="ComplexPortal" id="CPX-1555">
    <property type="entry name" value="SCF(TIR1) ubiquitin ligase complex, variant CUL1-RBX1B-ASK21"/>
</dbReference>
<dbReference type="ComplexPortal" id="CPX-1578">
    <property type="entry name" value="SCF(TIR1) ubiquitin ligase complex, variant CUL2-RBX1B-SKP1A"/>
</dbReference>
<dbReference type="ComplexPortal" id="CPX-1579">
    <property type="entry name" value="SCF(TIR1) ubiquitin ligase complex, variant CUL2-RBX1B-SKP1B"/>
</dbReference>
<dbReference type="ComplexPortal" id="CPX-1580">
    <property type="entry name" value="SCF(TIR1) ubiquitin ligase complex, variant CUL2-RBX1B-ASK3"/>
</dbReference>
<dbReference type="ComplexPortal" id="CPX-1581">
    <property type="entry name" value="SCF(TIR1) ubiquitin ligase complex, variant CUL2-RBX1B-ASK4"/>
</dbReference>
<dbReference type="ComplexPortal" id="CPX-1582">
    <property type="entry name" value="SCF(TIR1) ubiquitin ligase complex, variant CUL2-RBX1B-ASK5"/>
</dbReference>
<dbReference type="ComplexPortal" id="CPX-1583">
    <property type="entry name" value="SCF(TIR1) ubiquitin ligase complex, variant CUL2-RBX1B-ASK6"/>
</dbReference>
<dbReference type="ComplexPortal" id="CPX-1584">
    <property type="entry name" value="SCF(TIR1) ubiquitin ligase complex, variant CUL2-RBX1B-ASK7"/>
</dbReference>
<dbReference type="ComplexPortal" id="CPX-1585">
    <property type="entry name" value="SCF(TIR1) ubiquitin ligase complex, variant CUL2-RBX1B-ASK8"/>
</dbReference>
<dbReference type="ComplexPortal" id="CPX-1586">
    <property type="entry name" value="SCF(TIR1) ubiquitin ligase complex, variant CUL2-RBX1B-ASK9"/>
</dbReference>
<dbReference type="ComplexPortal" id="CPX-1587">
    <property type="entry name" value="SCF(TIR1) ubiquitin ligase complex, variant CUL2-RBX1B-ASK10"/>
</dbReference>
<dbReference type="ComplexPortal" id="CPX-1588">
    <property type="entry name" value="SCF(TIR1) ubiquitin ligase complex, variant CUL2-RBX1B-ASK11"/>
</dbReference>
<dbReference type="ComplexPortal" id="CPX-1589">
    <property type="entry name" value="SCF(TIR1) ubiquitin ligase complex, variant CUL2-RBX1B-ASK12"/>
</dbReference>
<dbReference type="ComplexPortal" id="CPX-1590">
    <property type="entry name" value="SCF(TIR1) ubiquitin ligase complex, variant CUL2-RBX1B-ASK13"/>
</dbReference>
<dbReference type="ComplexPortal" id="CPX-1591">
    <property type="entry name" value="SCF(TIR1) ubiquitin ligase complex, variant CUL2-RBX1B-ASK14"/>
</dbReference>
<dbReference type="ComplexPortal" id="CPX-1592">
    <property type="entry name" value="SCF(TIR1) ubiquitin ligase complex, variant CUL2-RBX1B-ASK15"/>
</dbReference>
<dbReference type="ComplexPortal" id="CPX-1593">
    <property type="entry name" value="SCF(TIR1) ubiquitin ligase complex, variant CUL2-RBX1B-ASK16"/>
</dbReference>
<dbReference type="ComplexPortal" id="CPX-1594">
    <property type="entry name" value="SCF(TIR1) ubiquitin ligase complex, variant CUL2-RBX1B-ASK17"/>
</dbReference>
<dbReference type="ComplexPortal" id="CPX-1595">
    <property type="entry name" value="SCF(TIR1) ubiquitin ligase complex, variant CUL2-RBX1B-ASK18"/>
</dbReference>
<dbReference type="ComplexPortal" id="CPX-1596">
    <property type="entry name" value="SCF(TIR1) ubiquitin ligase complex, variant CUL2-RBX1B-ASK19"/>
</dbReference>
<dbReference type="ComplexPortal" id="CPX-1597">
    <property type="entry name" value="SCF(TIR1) ubiquitin ligase complex, variant CUL2-RBX1B-ASK20"/>
</dbReference>
<dbReference type="ComplexPortal" id="CPX-1598">
    <property type="entry name" value="SCF(TIR1) ubiquitin ligase complex, variant CUL2-RBX1B-ASK21"/>
</dbReference>
<dbReference type="FunCoup" id="Q9M2B0">
    <property type="interactions" value="3645"/>
</dbReference>
<dbReference type="STRING" id="3702.Q9M2B0"/>
<dbReference type="PaxDb" id="3702-AT3G42830.1"/>
<dbReference type="ProteomicsDB" id="225978"/>
<dbReference type="EnsemblPlants" id="AT3G42830.1">
    <property type="protein sequence ID" value="AT3G42830.1"/>
    <property type="gene ID" value="AT3G42830"/>
</dbReference>
<dbReference type="GeneID" id="823327"/>
<dbReference type="Gramene" id="AT3G42830.1">
    <property type="protein sequence ID" value="AT3G42830.1"/>
    <property type="gene ID" value="AT3G42830"/>
</dbReference>
<dbReference type="KEGG" id="ath:AT3G42830"/>
<dbReference type="Araport" id="AT3G42830"/>
<dbReference type="TAIR" id="AT3G42830"/>
<dbReference type="eggNOG" id="KOG2930">
    <property type="taxonomic scope" value="Eukaryota"/>
</dbReference>
<dbReference type="HOGENOM" id="CLU_115512_2_1_1"/>
<dbReference type="InParanoid" id="Q9M2B0"/>
<dbReference type="OMA" id="CIECLAN"/>
<dbReference type="OrthoDB" id="8962942at2759"/>
<dbReference type="PhylomeDB" id="Q9M2B0"/>
<dbReference type="UniPathway" id="UPA00143"/>
<dbReference type="PRO" id="PR:Q9M2B0"/>
<dbReference type="Proteomes" id="UP000006548">
    <property type="component" value="Chromosome 3"/>
</dbReference>
<dbReference type="ExpressionAtlas" id="Q9M2B0">
    <property type="expression patterns" value="baseline and differential"/>
</dbReference>
<dbReference type="GO" id="GO:0005737">
    <property type="term" value="C:cytoplasm"/>
    <property type="evidence" value="ECO:0007669"/>
    <property type="project" value="UniProtKB-SubCell"/>
</dbReference>
<dbReference type="GO" id="GO:0005634">
    <property type="term" value="C:nucleus"/>
    <property type="evidence" value="ECO:0007669"/>
    <property type="project" value="UniProtKB-SubCell"/>
</dbReference>
<dbReference type="GO" id="GO:0019005">
    <property type="term" value="C:SCF ubiquitin ligase complex"/>
    <property type="evidence" value="ECO:0000250"/>
    <property type="project" value="ComplexPortal"/>
</dbReference>
<dbReference type="GO" id="GO:0008270">
    <property type="term" value="F:zinc ion binding"/>
    <property type="evidence" value="ECO:0007669"/>
    <property type="project" value="UniProtKB-KW"/>
</dbReference>
<dbReference type="GO" id="GO:0009734">
    <property type="term" value="P:auxin-activated signaling pathway"/>
    <property type="evidence" value="ECO:0000303"/>
    <property type="project" value="ComplexPortal"/>
</dbReference>
<dbReference type="GO" id="GO:0009867">
    <property type="term" value="P:jasmonic acid mediated signaling pathway"/>
    <property type="evidence" value="ECO:0000315"/>
    <property type="project" value="ComplexPortal"/>
</dbReference>
<dbReference type="GO" id="GO:0016567">
    <property type="term" value="P:protein ubiquitination"/>
    <property type="evidence" value="ECO:0007669"/>
    <property type="project" value="UniProtKB-UniPathway"/>
</dbReference>
<dbReference type="GO" id="GO:0009733">
    <property type="term" value="P:response to auxin"/>
    <property type="evidence" value="ECO:0000303"/>
    <property type="project" value="ComplexPortal"/>
</dbReference>
<dbReference type="GO" id="GO:0009753">
    <property type="term" value="P:response to jasmonic acid"/>
    <property type="evidence" value="ECO:0000315"/>
    <property type="project" value="ComplexPortal"/>
</dbReference>
<dbReference type="CDD" id="cd16485">
    <property type="entry name" value="mRING-H2-C3H2C2D_RBX1"/>
    <property type="match status" value="1"/>
</dbReference>
<dbReference type="FunFam" id="3.30.40.10:FF:000010">
    <property type="entry name" value="E3 ubiquitin-protein ligase RBX1"/>
    <property type="match status" value="1"/>
</dbReference>
<dbReference type="Gene3D" id="3.30.40.10">
    <property type="entry name" value="Zinc/RING finger domain, C3HC4 (zinc finger)"/>
    <property type="match status" value="1"/>
</dbReference>
<dbReference type="InterPro" id="IPR051031">
    <property type="entry name" value="RING-box_E3_Ubiquitin_Ligase"/>
</dbReference>
<dbReference type="InterPro" id="IPR001841">
    <property type="entry name" value="Znf_RING"/>
</dbReference>
<dbReference type="InterPro" id="IPR013083">
    <property type="entry name" value="Znf_RING/FYVE/PHD"/>
</dbReference>
<dbReference type="InterPro" id="IPR024766">
    <property type="entry name" value="Znf_RING_H2"/>
</dbReference>
<dbReference type="PANTHER" id="PTHR11210">
    <property type="entry name" value="RING BOX"/>
    <property type="match status" value="1"/>
</dbReference>
<dbReference type="Pfam" id="PF12678">
    <property type="entry name" value="zf-rbx1"/>
    <property type="match status" value="1"/>
</dbReference>
<dbReference type="SUPFAM" id="SSF57850">
    <property type="entry name" value="RING/U-box"/>
    <property type="match status" value="1"/>
</dbReference>
<dbReference type="PROSITE" id="PS50089">
    <property type="entry name" value="ZF_RING_2"/>
    <property type="match status" value="1"/>
</dbReference>
<evidence type="ECO:0000250" key="1"/>
<evidence type="ECO:0000250" key="2">
    <source>
        <dbReference type="UniProtKB" id="P62878"/>
    </source>
</evidence>
<evidence type="ECO:0000255" key="3">
    <source>
        <dbReference type="PROSITE-ProRule" id="PRU00175"/>
    </source>
</evidence>
<evidence type="ECO:0000256" key="4">
    <source>
        <dbReference type="SAM" id="MobiDB-lite"/>
    </source>
</evidence>
<evidence type="ECO:0000269" key="5">
    <source>
    </source>
</evidence>
<evidence type="ECO:0000305" key="6"/>
<protein>
    <recommendedName>
        <fullName>RING-box protein 1b</fullName>
    </recommendedName>
    <alternativeName>
        <fullName>At-Rbx1;2</fullName>
    </alternativeName>
    <alternativeName>
        <fullName>RBX1-1</fullName>
    </alternativeName>
    <alternativeName>
        <fullName>RBX1b-At</fullName>
    </alternativeName>
</protein>
<name>RBX1B_ARATH</name>
<accession>Q9M2B0</accession>
<accession>Q1PEJ6</accession>